<comment type="function">
    <text evidence="1">Forms part of the ribosomal stalk which helps the ribosome interact with GTP-bound translation factors.</text>
</comment>
<comment type="subunit">
    <text evidence="1">Part of the ribosomal stalk of the 50S ribosomal subunit. Interacts with L10 and the large rRNA to form the base of the stalk. L10 forms an elongated spine to which L12 dimers bind in a sequential fashion forming a multimeric L10(L12)X complex.</text>
</comment>
<comment type="subcellular location">
    <subcellularLocation>
        <location>Plastid</location>
        <location>Chloroplast</location>
    </subcellularLocation>
</comment>
<comment type="similarity">
    <text evidence="1">Belongs to the universal ribosomal protein uL11 family.</text>
</comment>
<reference key="1">
    <citation type="journal article" date="1995" name="Plant Mol. Biol. Rep.">
        <title>The chloroplast genome of a chlorophyll a+c-containing alga, Odontella sinensis.</title>
        <authorList>
            <person name="Kowallik K.V."/>
            <person name="Stoebe B."/>
            <person name="Schaffran I."/>
            <person name="Kroth-Pancic P."/>
            <person name="Freier U."/>
        </authorList>
    </citation>
    <scope>NUCLEOTIDE SEQUENCE [LARGE SCALE GENOMIC DNA]</scope>
</reference>
<evidence type="ECO:0000255" key="1">
    <source>
        <dbReference type="HAMAP-Rule" id="MF_00736"/>
    </source>
</evidence>
<evidence type="ECO:0000305" key="2"/>
<feature type="chain" id="PRO_0000104426" description="Large ribosomal subunit protein uL11c">
    <location>
        <begin position="1"/>
        <end position="141"/>
    </location>
</feature>
<accession>P49549</accession>
<proteinExistence type="inferred from homology"/>
<organism>
    <name type="scientific">Trieres chinensis</name>
    <name type="common">Marine centric diatom</name>
    <name type="synonym">Odontella sinensis</name>
    <dbReference type="NCBI Taxonomy" id="1514140"/>
    <lineage>
        <taxon>Eukaryota</taxon>
        <taxon>Sar</taxon>
        <taxon>Stramenopiles</taxon>
        <taxon>Ochrophyta</taxon>
        <taxon>Bacillariophyta</taxon>
        <taxon>Mediophyceae</taxon>
        <taxon>Biddulphiophycidae</taxon>
        <taxon>Eupodiscales</taxon>
        <taxon>Parodontellaceae</taxon>
        <taxon>Trieres</taxon>
    </lineage>
</organism>
<sequence>MAKKITALIKLALPAGKATPAPPVGPALGQHGVNIAAFCKEYNAKTTDKTGLIIPVEISVYEDRSYTFILKTPPASVLLANAAKIKKGSSTPNRVNVGSITKSQLEEIASIKLPDLNTTKISSAMKIVEGTARNMGISIVD</sequence>
<name>RK11_TRICV</name>
<geneLocation type="chloroplast"/>
<keyword id="KW-0150">Chloroplast</keyword>
<keyword id="KW-0934">Plastid</keyword>
<keyword id="KW-0687">Ribonucleoprotein</keyword>
<keyword id="KW-0689">Ribosomal protein</keyword>
<keyword id="KW-0694">RNA-binding</keyword>
<keyword id="KW-0699">rRNA-binding</keyword>
<dbReference type="EMBL" id="Z67753">
    <property type="protein sequence ID" value="CAA91727.1"/>
    <property type="molecule type" value="Genomic_DNA"/>
</dbReference>
<dbReference type="PIR" id="S78354">
    <property type="entry name" value="S78354"/>
</dbReference>
<dbReference type="RefSeq" id="NP_043695.1">
    <property type="nucleotide sequence ID" value="NC_001713.1"/>
</dbReference>
<dbReference type="SMR" id="P49549"/>
<dbReference type="GeneID" id="801745"/>
<dbReference type="GO" id="GO:0009507">
    <property type="term" value="C:chloroplast"/>
    <property type="evidence" value="ECO:0007669"/>
    <property type="project" value="UniProtKB-SubCell"/>
</dbReference>
<dbReference type="GO" id="GO:0005762">
    <property type="term" value="C:mitochondrial large ribosomal subunit"/>
    <property type="evidence" value="ECO:0007669"/>
    <property type="project" value="TreeGrafter"/>
</dbReference>
<dbReference type="GO" id="GO:0070180">
    <property type="term" value="F:large ribosomal subunit rRNA binding"/>
    <property type="evidence" value="ECO:0007669"/>
    <property type="project" value="UniProtKB-UniRule"/>
</dbReference>
<dbReference type="GO" id="GO:0003735">
    <property type="term" value="F:structural constituent of ribosome"/>
    <property type="evidence" value="ECO:0007669"/>
    <property type="project" value="InterPro"/>
</dbReference>
<dbReference type="GO" id="GO:0006412">
    <property type="term" value="P:translation"/>
    <property type="evidence" value="ECO:0007669"/>
    <property type="project" value="UniProtKB-UniRule"/>
</dbReference>
<dbReference type="CDD" id="cd00349">
    <property type="entry name" value="Ribosomal_L11"/>
    <property type="match status" value="1"/>
</dbReference>
<dbReference type="FunFam" id="1.10.10.250:FF:000001">
    <property type="entry name" value="50S ribosomal protein L11"/>
    <property type="match status" value="1"/>
</dbReference>
<dbReference type="FunFam" id="3.30.1550.10:FF:000001">
    <property type="entry name" value="50S ribosomal protein L11"/>
    <property type="match status" value="1"/>
</dbReference>
<dbReference type="Gene3D" id="1.10.10.250">
    <property type="entry name" value="Ribosomal protein L11, C-terminal domain"/>
    <property type="match status" value="1"/>
</dbReference>
<dbReference type="Gene3D" id="3.30.1550.10">
    <property type="entry name" value="Ribosomal protein L11/L12, N-terminal domain"/>
    <property type="match status" value="1"/>
</dbReference>
<dbReference type="HAMAP" id="MF_00736">
    <property type="entry name" value="Ribosomal_uL11"/>
    <property type="match status" value="1"/>
</dbReference>
<dbReference type="InterPro" id="IPR000911">
    <property type="entry name" value="Ribosomal_uL11"/>
</dbReference>
<dbReference type="InterPro" id="IPR006519">
    <property type="entry name" value="Ribosomal_uL11_bac-typ"/>
</dbReference>
<dbReference type="InterPro" id="IPR020783">
    <property type="entry name" value="Ribosomal_uL11_C"/>
</dbReference>
<dbReference type="InterPro" id="IPR036769">
    <property type="entry name" value="Ribosomal_uL11_C_sf"/>
</dbReference>
<dbReference type="InterPro" id="IPR020785">
    <property type="entry name" value="Ribosomal_uL11_CS"/>
</dbReference>
<dbReference type="InterPro" id="IPR020784">
    <property type="entry name" value="Ribosomal_uL11_N"/>
</dbReference>
<dbReference type="InterPro" id="IPR036796">
    <property type="entry name" value="Ribosomal_uL11_N_sf"/>
</dbReference>
<dbReference type="NCBIfam" id="TIGR01632">
    <property type="entry name" value="L11_bact"/>
    <property type="match status" value="1"/>
</dbReference>
<dbReference type="PANTHER" id="PTHR11661">
    <property type="entry name" value="60S RIBOSOMAL PROTEIN L12"/>
    <property type="match status" value="1"/>
</dbReference>
<dbReference type="PANTHER" id="PTHR11661:SF1">
    <property type="entry name" value="LARGE RIBOSOMAL SUBUNIT PROTEIN UL11M"/>
    <property type="match status" value="1"/>
</dbReference>
<dbReference type="Pfam" id="PF00298">
    <property type="entry name" value="Ribosomal_L11"/>
    <property type="match status" value="1"/>
</dbReference>
<dbReference type="Pfam" id="PF03946">
    <property type="entry name" value="Ribosomal_L11_N"/>
    <property type="match status" value="1"/>
</dbReference>
<dbReference type="SMART" id="SM00649">
    <property type="entry name" value="RL11"/>
    <property type="match status" value="1"/>
</dbReference>
<dbReference type="SUPFAM" id="SSF54747">
    <property type="entry name" value="Ribosomal L11/L12e N-terminal domain"/>
    <property type="match status" value="1"/>
</dbReference>
<dbReference type="SUPFAM" id="SSF46906">
    <property type="entry name" value="Ribosomal protein L11, C-terminal domain"/>
    <property type="match status" value="1"/>
</dbReference>
<dbReference type="PROSITE" id="PS00359">
    <property type="entry name" value="RIBOSOMAL_L11"/>
    <property type="match status" value="1"/>
</dbReference>
<protein>
    <recommendedName>
        <fullName evidence="1">Large ribosomal subunit protein uL11c</fullName>
    </recommendedName>
    <alternativeName>
        <fullName evidence="2">50S ribosomal protein L11, chloroplastic</fullName>
    </alternativeName>
</protein>
<gene>
    <name evidence="1" type="primary">rpl11</name>
</gene>